<reference key="1">
    <citation type="journal article" date="1992" name="Eur. J. Biochem.">
        <title>Peroxisomal acetoacetyl-CoA thiolase of an n-alkane-utilizing yeast, Candida tropicalis.</title>
        <authorList>
            <person name="Kurihara T."/>
            <person name="Ueda M."/>
            <person name="Kanayama N."/>
            <person name="Kondo J."/>
            <person name="Teranishi Y."/>
            <person name="Tanaka A."/>
        </authorList>
    </citation>
    <scope>NUCLEOTIDE SEQUENCE [GENOMIC DNA]</scope>
    <source>
        <strain>ATCC 20336 / pK233 / NCYC 997</strain>
    </source>
</reference>
<evidence type="ECO:0000250" key="1"/>
<evidence type="ECO:0000255" key="2">
    <source>
        <dbReference type="PROSITE-ProRule" id="PRU10020"/>
    </source>
</evidence>
<evidence type="ECO:0000305" key="3"/>
<comment type="catalytic activity">
    <reaction>
        <text>an acyl-CoA + acetyl-CoA = a 3-oxoacyl-CoA + CoA</text>
        <dbReference type="Rhea" id="RHEA:21564"/>
        <dbReference type="ChEBI" id="CHEBI:57287"/>
        <dbReference type="ChEBI" id="CHEBI:57288"/>
        <dbReference type="ChEBI" id="CHEBI:58342"/>
        <dbReference type="ChEBI" id="CHEBI:90726"/>
        <dbReference type="EC" id="2.3.1.16"/>
    </reaction>
</comment>
<comment type="pathway">
    <text>Lipid metabolism; fatty acid metabolism.</text>
</comment>
<comment type="subunit">
    <text evidence="1">Homodimer.</text>
</comment>
<comment type="subcellular location">
    <subcellularLocation>
        <location>Peroxisome</location>
    </subcellularLocation>
</comment>
<comment type="similarity">
    <text evidence="3">Belongs to the thiolase-like superfamily. Thiolase family.</text>
</comment>
<proteinExistence type="inferred from homology"/>
<name>THIKB_CANTR</name>
<feature type="transit peptide" description="Peroxisome">
    <location>
        <begin position="1"/>
        <end status="unknown"/>
    </location>
</feature>
<feature type="chain" id="PRO_0000034076" description="3-ketoacyl-CoA thiolase B, peroxisomal">
    <location>
        <begin status="unknown"/>
        <end position="408"/>
    </location>
</feature>
<feature type="active site" description="Acyl-thioester intermediate" evidence="1">
    <location>
        <position position="112"/>
    </location>
</feature>
<feature type="active site" description="Proton acceptor" evidence="2">
    <location>
        <position position="366"/>
    </location>
</feature>
<feature type="active site" description="Proton acceptor" evidence="2">
    <location>
        <position position="394"/>
    </location>
</feature>
<accession>P33291</accession>
<sequence>MDRLNQLSGQLKPNAKQSILQKNPDDVVIVAAYRTAIGKGFKGSFRNVHSEFILTEFLKEFIKKTNIDPSLIEDVAIGNVLNQAAGATEHRGACLAAGIPYTAAFIAVNRFCSSGLMAISDIANKIKTGEIECGLAGGAESMSTNYRDPRVAPRIDPHLADDAQMEKCLIPMGITNENVANQFNISRERQDEFAAKSYNKAAKAVASGAFKSEILPIRSIIRNSDGTEKEIIVDTDEGPREGVTAESLGKLRPAFDGTTTAGNASQVSDGAAAVLLMKRSLAEAKGYPIIGKYVLCSTAGVPPEIMGVGPAFAIPEVLKRTGLTVDDIDVFEINEAFAAQCLYSAEQVNVPEEKLNINGGAIALGHPLGETGARQYATIIPLLKPGQIGLTSMCIGSGMGSASILVRE</sequence>
<keyword id="KW-0012">Acyltransferase</keyword>
<keyword id="KW-0276">Fatty acid metabolism</keyword>
<keyword id="KW-0443">Lipid metabolism</keyword>
<keyword id="KW-0576">Peroxisome</keyword>
<keyword id="KW-0808">Transferase</keyword>
<keyword id="KW-0809">Transit peptide</keyword>
<dbReference type="EC" id="2.3.1.16"/>
<dbReference type="EMBL" id="D17321">
    <property type="protein sequence ID" value="BAA04143.1"/>
    <property type="molecule type" value="Genomic_DNA"/>
</dbReference>
<dbReference type="SMR" id="P33291"/>
<dbReference type="VEuPathDB" id="FungiDB:CTMYA2_042690"/>
<dbReference type="VEuPathDB" id="FungiDB:CTRG_01068"/>
<dbReference type="UniPathway" id="UPA00199"/>
<dbReference type="GO" id="GO:0005777">
    <property type="term" value="C:peroxisome"/>
    <property type="evidence" value="ECO:0007669"/>
    <property type="project" value="UniProtKB-SubCell"/>
</dbReference>
<dbReference type="GO" id="GO:0003988">
    <property type="term" value="F:acetyl-CoA C-acyltransferase activity"/>
    <property type="evidence" value="ECO:0007669"/>
    <property type="project" value="UniProtKB-EC"/>
</dbReference>
<dbReference type="GO" id="GO:0006635">
    <property type="term" value="P:fatty acid beta-oxidation"/>
    <property type="evidence" value="ECO:0007669"/>
    <property type="project" value="TreeGrafter"/>
</dbReference>
<dbReference type="GO" id="GO:0010124">
    <property type="term" value="P:phenylacetate catabolic process"/>
    <property type="evidence" value="ECO:0007669"/>
    <property type="project" value="TreeGrafter"/>
</dbReference>
<dbReference type="CDD" id="cd00751">
    <property type="entry name" value="thiolase"/>
    <property type="match status" value="1"/>
</dbReference>
<dbReference type="Gene3D" id="3.40.47.10">
    <property type="match status" value="2"/>
</dbReference>
<dbReference type="InterPro" id="IPR002155">
    <property type="entry name" value="Thiolase"/>
</dbReference>
<dbReference type="InterPro" id="IPR016039">
    <property type="entry name" value="Thiolase-like"/>
</dbReference>
<dbReference type="InterPro" id="IPR050215">
    <property type="entry name" value="Thiolase-like_sf_Thiolase"/>
</dbReference>
<dbReference type="InterPro" id="IPR020615">
    <property type="entry name" value="Thiolase_acyl_enz_int_AS"/>
</dbReference>
<dbReference type="InterPro" id="IPR020610">
    <property type="entry name" value="Thiolase_AS"/>
</dbReference>
<dbReference type="InterPro" id="IPR020617">
    <property type="entry name" value="Thiolase_C"/>
</dbReference>
<dbReference type="InterPro" id="IPR020613">
    <property type="entry name" value="Thiolase_CS"/>
</dbReference>
<dbReference type="InterPro" id="IPR020616">
    <property type="entry name" value="Thiolase_N"/>
</dbReference>
<dbReference type="NCBIfam" id="TIGR01930">
    <property type="entry name" value="AcCoA-C-Actrans"/>
    <property type="match status" value="1"/>
</dbReference>
<dbReference type="PANTHER" id="PTHR43853">
    <property type="entry name" value="3-KETOACYL-COA THIOLASE, PEROXISOMAL"/>
    <property type="match status" value="1"/>
</dbReference>
<dbReference type="PANTHER" id="PTHR43853:SF8">
    <property type="entry name" value="3-KETOACYL-COA THIOLASE, PEROXISOMAL"/>
    <property type="match status" value="1"/>
</dbReference>
<dbReference type="Pfam" id="PF02803">
    <property type="entry name" value="Thiolase_C"/>
    <property type="match status" value="1"/>
</dbReference>
<dbReference type="Pfam" id="PF00108">
    <property type="entry name" value="Thiolase_N"/>
    <property type="match status" value="1"/>
</dbReference>
<dbReference type="PIRSF" id="PIRSF000429">
    <property type="entry name" value="Ac-CoA_Ac_transf"/>
    <property type="match status" value="1"/>
</dbReference>
<dbReference type="SUPFAM" id="SSF53901">
    <property type="entry name" value="Thiolase-like"/>
    <property type="match status" value="2"/>
</dbReference>
<dbReference type="PROSITE" id="PS00098">
    <property type="entry name" value="THIOLASE_1"/>
    <property type="match status" value="1"/>
</dbReference>
<dbReference type="PROSITE" id="PS00737">
    <property type="entry name" value="THIOLASE_2"/>
    <property type="match status" value="1"/>
</dbReference>
<dbReference type="PROSITE" id="PS00099">
    <property type="entry name" value="THIOLASE_3"/>
    <property type="match status" value="1"/>
</dbReference>
<protein>
    <recommendedName>
        <fullName>3-ketoacyl-CoA thiolase B, peroxisomal</fullName>
        <ecNumber>2.3.1.16</ecNumber>
    </recommendedName>
    <alternativeName>
        <fullName>Acetyl-CoA acyltransferase B</fullName>
    </alternativeName>
    <alternativeName>
        <fullName>Beta-ketothiolase B</fullName>
    </alternativeName>
    <alternativeName>
        <fullName>Peroxisomal 3-oxoacyl-CoA thiolase B</fullName>
    </alternativeName>
    <alternativeName>
        <fullName>Thiolase IB</fullName>
    </alternativeName>
</protein>
<organism>
    <name type="scientific">Candida tropicalis</name>
    <name type="common">Yeast</name>
    <dbReference type="NCBI Taxonomy" id="5482"/>
    <lineage>
        <taxon>Eukaryota</taxon>
        <taxon>Fungi</taxon>
        <taxon>Dikarya</taxon>
        <taxon>Ascomycota</taxon>
        <taxon>Saccharomycotina</taxon>
        <taxon>Pichiomycetes</taxon>
        <taxon>Debaryomycetaceae</taxon>
        <taxon>Candida/Lodderomyces clade</taxon>
        <taxon>Candida</taxon>
    </lineage>
</organism>